<reference key="1">
    <citation type="submission" date="2004-11" db="EMBL/GenBank/DDBJ databases">
        <authorList>
            <consortium name="The German cDNA consortium"/>
        </authorList>
    </citation>
    <scope>NUCLEOTIDE SEQUENCE [LARGE SCALE MRNA]</scope>
    <source>
        <tissue>Kidney</tissue>
    </source>
</reference>
<name>DJC16_PONAB</name>
<accession>Q5RCM7</accession>
<gene>
    <name type="primary">DNAJC16</name>
    <name type="synonym">ERDJ8</name>
</gene>
<comment type="function">
    <text evidence="1">Plays an important role in regulating the size of autophagosomes during the formation process.</text>
</comment>
<comment type="subcellular location">
    <subcellularLocation>
        <location evidence="1">Endoplasmic reticulum membrane</location>
        <topology evidence="6">Single-pass type IV membrane protein</topology>
    </subcellularLocation>
</comment>
<dbReference type="EMBL" id="CR858243">
    <property type="protein sequence ID" value="CAH90480.1"/>
    <property type="molecule type" value="mRNA"/>
</dbReference>
<dbReference type="RefSeq" id="NP_001125250.1">
    <property type="nucleotide sequence ID" value="NM_001131778.1"/>
</dbReference>
<dbReference type="SMR" id="Q5RCM7"/>
<dbReference type="FunCoup" id="Q5RCM7">
    <property type="interactions" value="1382"/>
</dbReference>
<dbReference type="STRING" id="9601.ENSPPYP00000002137"/>
<dbReference type="GlyCosmos" id="Q5RCM7">
    <property type="glycosylation" value="1 site, No reported glycans"/>
</dbReference>
<dbReference type="GeneID" id="100172145"/>
<dbReference type="KEGG" id="pon:100172145"/>
<dbReference type="CTD" id="23341"/>
<dbReference type="eggNOG" id="KOG0715">
    <property type="taxonomic scope" value="Eukaryota"/>
</dbReference>
<dbReference type="InParanoid" id="Q5RCM7"/>
<dbReference type="OrthoDB" id="10065037at2759"/>
<dbReference type="Proteomes" id="UP000001595">
    <property type="component" value="Unplaced"/>
</dbReference>
<dbReference type="GO" id="GO:0005789">
    <property type="term" value="C:endoplasmic reticulum membrane"/>
    <property type="evidence" value="ECO:0000250"/>
    <property type="project" value="UniProtKB"/>
</dbReference>
<dbReference type="GO" id="GO:0016243">
    <property type="term" value="P:regulation of autophagosome size"/>
    <property type="evidence" value="ECO:0000250"/>
    <property type="project" value="UniProtKB"/>
</dbReference>
<dbReference type="CDD" id="cd06257">
    <property type="entry name" value="DnaJ"/>
    <property type="match status" value="1"/>
</dbReference>
<dbReference type="CDD" id="cd02963">
    <property type="entry name" value="TRX_DnaJ"/>
    <property type="match status" value="1"/>
</dbReference>
<dbReference type="Gene3D" id="1.10.287.110">
    <property type="entry name" value="DnaJ domain"/>
    <property type="match status" value="1"/>
</dbReference>
<dbReference type="Gene3D" id="3.40.30.10">
    <property type="entry name" value="Glutaredoxin"/>
    <property type="match status" value="1"/>
</dbReference>
<dbReference type="InterPro" id="IPR052448">
    <property type="entry name" value="DnaJ_C16_autophagy_reg"/>
</dbReference>
<dbReference type="InterPro" id="IPR001623">
    <property type="entry name" value="DnaJ_domain"/>
</dbReference>
<dbReference type="InterPro" id="IPR018253">
    <property type="entry name" value="DnaJ_domain_CS"/>
</dbReference>
<dbReference type="InterPro" id="IPR043361">
    <property type="entry name" value="DNAJC16_TRX"/>
</dbReference>
<dbReference type="InterPro" id="IPR036869">
    <property type="entry name" value="J_dom_sf"/>
</dbReference>
<dbReference type="InterPro" id="IPR036249">
    <property type="entry name" value="Thioredoxin-like_sf"/>
</dbReference>
<dbReference type="InterPro" id="IPR013766">
    <property type="entry name" value="Thioredoxin_domain"/>
</dbReference>
<dbReference type="PANTHER" id="PTHR44303">
    <property type="entry name" value="DNAJ HOMOLOG SUBFAMILY C MEMBER 16"/>
    <property type="match status" value="1"/>
</dbReference>
<dbReference type="PANTHER" id="PTHR44303:SF2">
    <property type="entry name" value="DNAJ HOMOLOG SUBFAMILY C MEMBER 16"/>
    <property type="match status" value="1"/>
</dbReference>
<dbReference type="Pfam" id="PF00226">
    <property type="entry name" value="DnaJ"/>
    <property type="match status" value="1"/>
</dbReference>
<dbReference type="Pfam" id="PF00085">
    <property type="entry name" value="Thioredoxin"/>
    <property type="match status" value="1"/>
</dbReference>
<dbReference type="PRINTS" id="PR00625">
    <property type="entry name" value="JDOMAIN"/>
</dbReference>
<dbReference type="SMART" id="SM00271">
    <property type="entry name" value="DnaJ"/>
    <property type="match status" value="1"/>
</dbReference>
<dbReference type="SUPFAM" id="SSF46565">
    <property type="entry name" value="Chaperone J-domain"/>
    <property type="match status" value="1"/>
</dbReference>
<dbReference type="SUPFAM" id="SSF52833">
    <property type="entry name" value="Thioredoxin-like"/>
    <property type="match status" value="1"/>
</dbReference>
<dbReference type="PROSITE" id="PS00636">
    <property type="entry name" value="DNAJ_1"/>
    <property type="match status" value="1"/>
</dbReference>
<dbReference type="PROSITE" id="PS50076">
    <property type="entry name" value="DNAJ_2"/>
    <property type="match status" value="1"/>
</dbReference>
<dbReference type="PROSITE" id="PS51352">
    <property type="entry name" value="THIOREDOXIN_2"/>
    <property type="match status" value="1"/>
</dbReference>
<sequence>MEVRKLSISWQFLIVLVLILQILSALDFDPYKVLGVSRTASQADIKKAYKKLAREWHPDKNKDPGAEDKFIQISKAYEILSNEEKRSNYDQYGDAGENQGYQKQQQQREYRFRHFHENFYFDESFFHFPFNSERRDSIDEKYLLHFSHYVNEVVPDSFKKPYLIKITSDWCFSCIHIEPVWKEVVQELEELGVGIGVVHAGYERRLAHHLGAHSTPSILGIINGKISFFRNAVVRENLRQFVESLLPGNLVEKVTGKNYVRFLSGWQQENKPHVLLFDQTPIVPLLYKLTAFAYKDYLSFGYVYVGLRGTEEMTRRYNINIYAPTLLVFKEHINKPADVIQARGMKKQIIDDFITQNKHLLAARLTSQKLFHELCPVRRSHRQRKYCVVLLTAETTKLSKPFEAFLSFALANTQDTVRFVHVYSNRQQEFAGTLLPDGEAFQGKSAVSILERRNTAGRVVYKTLEDPWTGSESDKFILLGYLDQLRKDPALLSSEAVLPDLTDELAPVFLLRWFYSACDYISDCWDSIFHNNWREMMPLLSLIFSALFILFGTVIVQAFSDSSDERESSPPDKEEAQEKTGKTEPSFTKENSSKIPKKGFVEVTELTDVTYTSNLVRLRPGHMNVVLILSNSTKTSLLQKFALEVYTFTGSSCLHFSFLSLDKHREWLEYLLEFAQDAAPIPNQYDKHFMERDYTGYVLALNGHKKYFCLFKPQKTVEEEEAIGSCSDVDSSLYLGESRGKPSCGLGSRPIKGKLSKLSLWMERLLEGSLQRFYIPSWPELD</sequence>
<proteinExistence type="evidence at transcript level"/>
<keyword id="KW-0072">Autophagy</keyword>
<keyword id="KW-0256">Endoplasmic reticulum</keyword>
<keyword id="KW-0325">Glycoprotein</keyword>
<keyword id="KW-0472">Membrane</keyword>
<keyword id="KW-1185">Reference proteome</keyword>
<keyword id="KW-0732">Signal</keyword>
<keyword id="KW-0812">Transmembrane</keyword>
<keyword id="KW-1133">Transmembrane helix</keyword>
<feature type="signal peptide" evidence="2">
    <location>
        <begin position="1"/>
        <end position="25"/>
    </location>
</feature>
<feature type="chain" id="PRO_0000236685" description="DnaJ homolog subfamily C member 16">
    <location>
        <begin position="26"/>
        <end position="782"/>
    </location>
</feature>
<feature type="topological domain" description="Cytoplasmic" evidence="2">
    <location>
        <begin position="26"/>
        <end position="535"/>
    </location>
</feature>
<feature type="transmembrane region" description="Helical; Anchor for type IV membrane protein" evidence="2">
    <location>
        <begin position="536"/>
        <end position="556"/>
    </location>
</feature>
<feature type="topological domain" description="Extracellular" evidence="2">
    <location>
        <begin position="557"/>
        <end position="782"/>
    </location>
</feature>
<feature type="domain" description="J" evidence="3">
    <location>
        <begin position="29"/>
        <end position="93"/>
    </location>
</feature>
<feature type="domain" description="Thioredoxin" evidence="4">
    <location>
        <begin position="119"/>
        <end position="247"/>
    </location>
</feature>
<feature type="region of interest" description="Disordered" evidence="5">
    <location>
        <begin position="562"/>
        <end position="593"/>
    </location>
</feature>
<feature type="compositionally biased region" description="Basic and acidic residues" evidence="5">
    <location>
        <begin position="563"/>
        <end position="582"/>
    </location>
</feature>
<feature type="compositionally biased region" description="Polar residues" evidence="5">
    <location>
        <begin position="583"/>
        <end position="593"/>
    </location>
</feature>
<feature type="glycosylation site" description="N-linked (GlcNAc...) asparagine" evidence="2">
    <location>
        <position position="631"/>
    </location>
</feature>
<evidence type="ECO:0000250" key="1">
    <source>
        <dbReference type="UniProtKB" id="Q9Y2G8"/>
    </source>
</evidence>
<evidence type="ECO:0000255" key="2"/>
<evidence type="ECO:0000255" key="3">
    <source>
        <dbReference type="PROSITE-ProRule" id="PRU00286"/>
    </source>
</evidence>
<evidence type="ECO:0000255" key="4">
    <source>
        <dbReference type="PROSITE-ProRule" id="PRU00691"/>
    </source>
</evidence>
<evidence type="ECO:0000256" key="5">
    <source>
        <dbReference type="SAM" id="MobiDB-lite"/>
    </source>
</evidence>
<evidence type="ECO:0000305" key="6"/>
<protein>
    <recommendedName>
        <fullName>DnaJ homolog subfamily C member 16</fullName>
    </recommendedName>
    <alternativeName>
        <fullName evidence="1">Endoplasmic reticulum DNA J domain-containing protein 8</fullName>
        <shortName>ER-resident protein ERdj8</shortName>
        <shortName>ERdj8</shortName>
    </alternativeName>
</protein>
<organism>
    <name type="scientific">Pongo abelii</name>
    <name type="common">Sumatran orangutan</name>
    <name type="synonym">Pongo pygmaeus abelii</name>
    <dbReference type="NCBI Taxonomy" id="9601"/>
    <lineage>
        <taxon>Eukaryota</taxon>
        <taxon>Metazoa</taxon>
        <taxon>Chordata</taxon>
        <taxon>Craniata</taxon>
        <taxon>Vertebrata</taxon>
        <taxon>Euteleostomi</taxon>
        <taxon>Mammalia</taxon>
        <taxon>Eutheria</taxon>
        <taxon>Euarchontoglires</taxon>
        <taxon>Primates</taxon>
        <taxon>Haplorrhini</taxon>
        <taxon>Catarrhini</taxon>
        <taxon>Hominidae</taxon>
        <taxon>Pongo</taxon>
    </lineage>
</organism>